<sequence length="84" mass="10413">MNLIPRTSIVVYLKHMKHERQIRKYGHIVHSNRDRKFVIMYVNEQDVDQIVHKLMQLKYVRHIDGSPYKYLKKTYEKEKHEIYN</sequence>
<accession>Q2FHV9</accession>
<dbReference type="EMBL" id="CP000255">
    <property type="protein sequence ID" value="ABD21688.1"/>
    <property type="molecule type" value="Genomic_DNA"/>
</dbReference>
<dbReference type="RefSeq" id="WP_001049150.1">
    <property type="nucleotide sequence ID" value="NZ_CP027476.1"/>
</dbReference>
<dbReference type="SMR" id="Q2FHV9"/>
<dbReference type="KEGG" id="saa:SAUSA300_1021"/>
<dbReference type="HOGENOM" id="CLU_159890_2_1_9"/>
<dbReference type="OMA" id="KEYDYKM"/>
<dbReference type="Proteomes" id="UP000001939">
    <property type="component" value="Chromosome"/>
</dbReference>
<dbReference type="GO" id="GO:0005737">
    <property type="term" value="C:cytoplasm"/>
    <property type="evidence" value="ECO:0007669"/>
    <property type="project" value="UniProtKB-SubCell"/>
</dbReference>
<dbReference type="HAMAP" id="MF_01126">
    <property type="entry name" value="UPF0298"/>
    <property type="match status" value="1"/>
</dbReference>
<dbReference type="InterPro" id="IPR016979">
    <property type="entry name" value="DUF2129"/>
</dbReference>
<dbReference type="Pfam" id="PF09902">
    <property type="entry name" value="DUF2129"/>
    <property type="match status" value="1"/>
</dbReference>
<dbReference type="PIRSF" id="PIRSF031653">
    <property type="entry name" value="UCP031653"/>
    <property type="match status" value="1"/>
</dbReference>
<keyword id="KW-0963">Cytoplasm</keyword>
<protein>
    <recommendedName>
        <fullName evidence="1">UPF0298 protein SAUSA300_1021</fullName>
    </recommendedName>
</protein>
<proteinExistence type="inferred from homology"/>
<comment type="subcellular location">
    <subcellularLocation>
        <location evidence="1">Cytoplasm</location>
    </subcellularLocation>
</comment>
<comment type="similarity">
    <text evidence="1">Belongs to the UPF0298 family.</text>
</comment>
<reference key="1">
    <citation type="journal article" date="2006" name="Lancet">
        <title>Complete genome sequence of USA300, an epidemic clone of community-acquired meticillin-resistant Staphylococcus aureus.</title>
        <authorList>
            <person name="Diep B.A."/>
            <person name="Gill S.R."/>
            <person name="Chang R.F."/>
            <person name="Phan T.H."/>
            <person name="Chen J.H."/>
            <person name="Davidson M.G."/>
            <person name="Lin F."/>
            <person name="Lin J."/>
            <person name="Carleton H.A."/>
            <person name="Mongodin E.F."/>
            <person name="Sensabaugh G.F."/>
            <person name="Perdreau-Remington F."/>
        </authorList>
    </citation>
    <scope>NUCLEOTIDE SEQUENCE [LARGE SCALE GENOMIC DNA]</scope>
    <source>
        <strain>USA300</strain>
    </source>
</reference>
<gene>
    <name type="ordered locus">SAUSA300_1021</name>
</gene>
<evidence type="ECO:0000255" key="1">
    <source>
        <dbReference type="HAMAP-Rule" id="MF_01126"/>
    </source>
</evidence>
<name>Y1021_STAA3</name>
<organism>
    <name type="scientific">Staphylococcus aureus (strain USA300)</name>
    <dbReference type="NCBI Taxonomy" id="367830"/>
    <lineage>
        <taxon>Bacteria</taxon>
        <taxon>Bacillati</taxon>
        <taxon>Bacillota</taxon>
        <taxon>Bacilli</taxon>
        <taxon>Bacillales</taxon>
        <taxon>Staphylococcaceae</taxon>
        <taxon>Staphylococcus</taxon>
    </lineage>
</organism>
<feature type="chain" id="PRO_1000065364" description="UPF0298 protein SAUSA300_1021">
    <location>
        <begin position="1"/>
        <end position="84"/>
    </location>
</feature>